<comment type="function">
    <text evidence="1">Located at the top of the head of the 30S subunit, it contacts several helices of the 16S rRNA. In the 70S ribosome it contacts the 23S rRNA (bridge B1a) and protein L5 of the 50S subunit (bridge B1b), connecting the 2 subunits; these bridges are implicated in subunit movement. Contacts the tRNAs in the A and P-sites.</text>
</comment>
<comment type="subunit">
    <text evidence="1">Part of the 30S ribosomal subunit. Forms a loose heterodimer with protein S19. Forms two bridges to the 50S subunit in the 70S ribosome.</text>
</comment>
<comment type="similarity">
    <text evidence="1">Belongs to the universal ribosomal protein uS13 family.</text>
</comment>
<proteinExistence type="inferred from homology"/>
<evidence type="ECO:0000255" key="1">
    <source>
        <dbReference type="HAMAP-Rule" id="MF_01315"/>
    </source>
</evidence>
<evidence type="ECO:0000256" key="2">
    <source>
        <dbReference type="SAM" id="MobiDB-lite"/>
    </source>
</evidence>
<evidence type="ECO:0000305" key="3"/>
<organism>
    <name type="scientific">Clostridium botulinum (strain Langeland / NCTC 10281 / Type F)</name>
    <dbReference type="NCBI Taxonomy" id="441772"/>
    <lineage>
        <taxon>Bacteria</taxon>
        <taxon>Bacillati</taxon>
        <taxon>Bacillota</taxon>
        <taxon>Clostridia</taxon>
        <taxon>Eubacteriales</taxon>
        <taxon>Clostridiaceae</taxon>
        <taxon>Clostridium</taxon>
    </lineage>
</organism>
<sequence>MARISGIDLPKEKRVEIGLTYIYGIGLPTSQEILKATGVNPDTRVKDLSEEEVNAIRDYVNKNVKVEGDLRREIKLNIKRLVEIGSYRGIRHRRNLPVRGQKTKTNARTRKGPKRAIGGKKKK</sequence>
<dbReference type="EMBL" id="CP000728">
    <property type="protein sequence ID" value="ABS40762.1"/>
    <property type="molecule type" value="Genomic_DNA"/>
</dbReference>
<dbReference type="RefSeq" id="WP_003357564.1">
    <property type="nucleotide sequence ID" value="NC_009699.1"/>
</dbReference>
<dbReference type="SMR" id="A7GJ48"/>
<dbReference type="GeneID" id="92940224"/>
<dbReference type="KEGG" id="cbf:CLI_3637"/>
<dbReference type="HOGENOM" id="CLU_103849_1_2_9"/>
<dbReference type="Proteomes" id="UP000002410">
    <property type="component" value="Chromosome"/>
</dbReference>
<dbReference type="GO" id="GO:0005829">
    <property type="term" value="C:cytosol"/>
    <property type="evidence" value="ECO:0007669"/>
    <property type="project" value="TreeGrafter"/>
</dbReference>
<dbReference type="GO" id="GO:0015935">
    <property type="term" value="C:small ribosomal subunit"/>
    <property type="evidence" value="ECO:0007669"/>
    <property type="project" value="TreeGrafter"/>
</dbReference>
<dbReference type="GO" id="GO:0019843">
    <property type="term" value="F:rRNA binding"/>
    <property type="evidence" value="ECO:0007669"/>
    <property type="project" value="UniProtKB-UniRule"/>
</dbReference>
<dbReference type="GO" id="GO:0003735">
    <property type="term" value="F:structural constituent of ribosome"/>
    <property type="evidence" value="ECO:0007669"/>
    <property type="project" value="InterPro"/>
</dbReference>
<dbReference type="GO" id="GO:0000049">
    <property type="term" value="F:tRNA binding"/>
    <property type="evidence" value="ECO:0007669"/>
    <property type="project" value="UniProtKB-UniRule"/>
</dbReference>
<dbReference type="GO" id="GO:0006412">
    <property type="term" value="P:translation"/>
    <property type="evidence" value="ECO:0007669"/>
    <property type="project" value="UniProtKB-UniRule"/>
</dbReference>
<dbReference type="FunFam" id="1.10.8.50:FF:000001">
    <property type="entry name" value="30S ribosomal protein S13"/>
    <property type="match status" value="1"/>
</dbReference>
<dbReference type="FunFam" id="4.10.910.10:FF:000001">
    <property type="entry name" value="30S ribosomal protein S13"/>
    <property type="match status" value="1"/>
</dbReference>
<dbReference type="Gene3D" id="1.10.8.50">
    <property type="match status" value="1"/>
</dbReference>
<dbReference type="Gene3D" id="4.10.910.10">
    <property type="entry name" value="30s ribosomal protein s13, domain 2"/>
    <property type="match status" value="1"/>
</dbReference>
<dbReference type="HAMAP" id="MF_01315">
    <property type="entry name" value="Ribosomal_uS13"/>
    <property type="match status" value="1"/>
</dbReference>
<dbReference type="InterPro" id="IPR027437">
    <property type="entry name" value="Rbsml_uS13_C"/>
</dbReference>
<dbReference type="InterPro" id="IPR001892">
    <property type="entry name" value="Ribosomal_uS13"/>
</dbReference>
<dbReference type="InterPro" id="IPR010979">
    <property type="entry name" value="Ribosomal_uS13-like_H2TH"/>
</dbReference>
<dbReference type="InterPro" id="IPR019980">
    <property type="entry name" value="Ribosomal_uS13_bac-type"/>
</dbReference>
<dbReference type="InterPro" id="IPR018269">
    <property type="entry name" value="Ribosomal_uS13_CS"/>
</dbReference>
<dbReference type="NCBIfam" id="TIGR03631">
    <property type="entry name" value="uS13_bact"/>
    <property type="match status" value="1"/>
</dbReference>
<dbReference type="PANTHER" id="PTHR10871">
    <property type="entry name" value="30S RIBOSOMAL PROTEIN S13/40S RIBOSOMAL PROTEIN S18"/>
    <property type="match status" value="1"/>
</dbReference>
<dbReference type="PANTHER" id="PTHR10871:SF1">
    <property type="entry name" value="SMALL RIBOSOMAL SUBUNIT PROTEIN US13M"/>
    <property type="match status" value="1"/>
</dbReference>
<dbReference type="Pfam" id="PF00416">
    <property type="entry name" value="Ribosomal_S13"/>
    <property type="match status" value="1"/>
</dbReference>
<dbReference type="PIRSF" id="PIRSF002134">
    <property type="entry name" value="Ribosomal_S13"/>
    <property type="match status" value="1"/>
</dbReference>
<dbReference type="SUPFAM" id="SSF46946">
    <property type="entry name" value="S13-like H2TH domain"/>
    <property type="match status" value="1"/>
</dbReference>
<dbReference type="PROSITE" id="PS00646">
    <property type="entry name" value="RIBOSOMAL_S13_1"/>
    <property type="match status" value="1"/>
</dbReference>
<dbReference type="PROSITE" id="PS50159">
    <property type="entry name" value="RIBOSOMAL_S13_2"/>
    <property type="match status" value="1"/>
</dbReference>
<accession>A7GJ48</accession>
<keyword id="KW-0687">Ribonucleoprotein</keyword>
<keyword id="KW-0689">Ribosomal protein</keyword>
<keyword id="KW-0694">RNA-binding</keyword>
<keyword id="KW-0699">rRNA-binding</keyword>
<keyword id="KW-0820">tRNA-binding</keyword>
<feature type="chain" id="PRO_1000051879" description="Small ribosomal subunit protein uS13">
    <location>
        <begin position="1"/>
        <end position="123"/>
    </location>
</feature>
<feature type="region of interest" description="Disordered" evidence="2">
    <location>
        <begin position="93"/>
        <end position="123"/>
    </location>
</feature>
<name>RS13_CLOBL</name>
<protein>
    <recommendedName>
        <fullName evidence="1">Small ribosomal subunit protein uS13</fullName>
    </recommendedName>
    <alternativeName>
        <fullName evidence="3">30S ribosomal protein S13</fullName>
    </alternativeName>
</protein>
<reference key="1">
    <citation type="submission" date="2007-06" db="EMBL/GenBank/DDBJ databases">
        <authorList>
            <person name="Brinkac L.M."/>
            <person name="Daugherty S."/>
            <person name="Dodson R.J."/>
            <person name="Madupu R."/>
            <person name="Brown J.L."/>
            <person name="Bruce D."/>
            <person name="Detter C."/>
            <person name="Munk C."/>
            <person name="Smith L.A."/>
            <person name="Smith T.J."/>
            <person name="White O."/>
            <person name="Brettin T.S."/>
        </authorList>
    </citation>
    <scope>NUCLEOTIDE SEQUENCE [LARGE SCALE GENOMIC DNA]</scope>
    <source>
        <strain>Langeland / NCTC 10281 / Type F</strain>
    </source>
</reference>
<gene>
    <name evidence="1" type="primary">rpsM</name>
    <name type="ordered locus">CLI_3637</name>
</gene>